<proteinExistence type="inferred from homology"/>
<comment type="function">
    <text evidence="1">Tetrapolymerization of the monopyrrole PBG into the hydroxymethylbilane pre-uroporphyrinogen in several discrete steps.</text>
</comment>
<comment type="catalytic activity">
    <reaction evidence="1">
        <text>4 porphobilinogen + H2O = hydroxymethylbilane + 4 NH4(+)</text>
        <dbReference type="Rhea" id="RHEA:13185"/>
        <dbReference type="ChEBI" id="CHEBI:15377"/>
        <dbReference type="ChEBI" id="CHEBI:28938"/>
        <dbReference type="ChEBI" id="CHEBI:57845"/>
        <dbReference type="ChEBI" id="CHEBI:58126"/>
        <dbReference type="EC" id="2.5.1.61"/>
    </reaction>
</comment>
<comment type="cofactor">
    <cofactor evidence="1">
        <name>dipyrromethane</name>
        <dbReference type="ChEBI" id="CHEBI:60342"/>
    </cofactor>
    <text evidence="1">Binds 1 dipyrromethane group covalently.</text>
</comment>
<comment type="pathway">
    <text evidence="1">Porphyrin-containing compound metabolism; protoporphyrin-IX biosynthesis; coproporphyrinogen-III from 5-aminolevulinate: step 2/4.</text>
</comment>
<comment type="subunit">
    <text evidence="1">Monomer.</text>
</comment>
<comment type="miscellaneous">
    <text evidence="1">The porphobilinogen subunits are added to the dipyrromethane group.</text>
</comment>
<comment type="similarity">
    <text evidence="1">Belongs to the HMBS family.</text>
</comment>
<reference key="1">
    <citation type="journal article" date="2008" name="BMC Genomics">
        <title>The missing link: Bordetella petrii is endowed with both the metabolic versatility of environmental bacteria and virulence traits of pathogenic Bordetellae.</title>
        <authorList>
            <person name="Gross R."/>
            <person name="Guzman C.A."/>
            <person name="Sebaihia M."/>
            <person name="Martin dos Santos V.A.P."/>
            <person name="Pieper D.H."/>
            <person name="Koebnik R."/>
            <person name="Lechner M."/>
            <person name="Bartels D."/>
            <person name="Buhrmester J."/>
            <person name="Choudhuri J.V."/>
            <person name="Ebensen T."/>
            <person name="Gaigalat L."/>
            <person name="Herrmann S."/>
            <person name="Khachane A.N."/>
            <person name="Larisch C."/>
            <person name="Link S."/>
            <person name="Linke B."/>
            <person name="Meyer F."/>
            <person name="Mormann S."/>
            <person name="Nakunst D."/>
            <person name="Rueckert C."/>
            <person name="Schneiker-Bekel S."/>
            <person name="Schulze K."/>
            <person name="Voerholter F.-J."/>
            <person name="Yevsa T."/>
            <person name="Engle J.T."/>
            <person name="Goldman W.E."/>
            <person name="Puehler A."/>
            <person name="Goebel U.B."/>
            <person name="Goesmann A."/>
            <person name="Bloecker H."/>
            <person name="Kaiser O."/>
            <person name="Martinez-Arias R."/>
        </authorList>
    </citation>
    <scope>NUCLEOTIDE SEQUENCE [LARGE SCALE GENOMIC DNA]</scope>
    <source>
        <strain>ATCC BAA-461 / DSM 12804 / CCUG 43448</strain>
    </source>
</reference>
<evidence type="ECO:0000255" key="1">
    <source>
        <dbReference type="HAMAP-Rule" id="MF_00260"/>
    </source>
</evidence>
<dbReference type="EC" id="2.5.1.61" evidence="1"/>
<dbReference type="EMBL" id="AM902716">
    <property type="protein sequence ID" value="CAP42405.1"/>
    <property type="molecule type" value="Genomic_DNA"/>
</dbReference>
<dbReference type="SMR" id="A9IKF3"/>
<dbReference type="STRING" id="94624.Bpet2065"/>
<dbReference type="KEGG" id="bpt:Bpet2065"/>
<dbReference type="eggNOG" id="COG0181">
    <property type="taxonomic scope" value="Bacteria"/>
</dbReference>
<dbReference type="UniPathway" id="UPA00251">
    <property type="reaction ID" value="UER00319"/>
</dbReference>
<dbReference type="Proteomes" id="UP000001225">
    <property type="component" value="Chromosome"/>
</dbReference>
<dbReference type="GO" id="GO:0005737">
    <property type="term" value="C:cytoplasm"/>
    <property type="evidence" value="ECO:0007669"/>
    <property type="project" value="TreeGrafter"/>
</dbReference>
<dbReference type="GO" id="GO:0004418">
    <property type="term" value="F:hydroxymethylbilane synthase activity"/>
    <property type="evidence" value="ECO:0007669"/>
    <property type="project" value="UniProtKB-UniRule"/>
</dbReference>
<dbReference type="GO" id="GO:0006782">
    <property type="term" value="P:protoporphyrinogen IX biosynthetic process"/>
    <property type="evidence" value="ECO:0007669"/>
    <property type="project" value="UniProtKB-UniRule"/>
</dbReference>
<dbReference type="CDD" id="cd13646">
    <property type="entry name" value="PBP2_EcHMBS_like"/>
    <property type="match status" value="1"/>
</dbReference>
<dbReference type="FunFam" id="3.30.160.40:FF:000002">
    <property type="entry name" value="Porphobilinogen deaminase"/>
    <property type="match status" value="1"/>
</dbReference>
<dbReference type="FunFam" id="3.40.190.10:FF:000004">
    <property type="entry name" value="Porphobilinogen deaminase"/>
    <property type="match status" value="1"/>
</dbReference>
<dbReference type="FunFam" id="3.40.190.10:FF:000005">
    <property type="entry name" value="Porphobilinogen deaminase"/>
    <property type="match status" value="1"/>
</dbReference>
<dbReference type="Gene3D" id="3.40.190.10">
    <property type="entry name" value="Periplasmic binding protein-like II"/>
    <property type="match status" value="2"/>
</dbReference>
<dbReference type="Gene3D" id="3.30.160.40">
    <property type="entry name" value="Porphobilinogen deaminase, C-terminal domain"/>
    <property type="match status" value="1"/>
</dbReference>
<dbReference type="HAMAP" id="MF_00260">
    <property type="entry name" value="Porphobil_deam"/>
    <property type="match status" value="1"/>
</dbReference>
<dbReference type="InterPro" id="IPR000860">
    <property type="entry name" value="HemC"/>
</dbReference>
<dbReference type="InterPro" id="IPR022419">
    <property type="entry name" value="Porphobilin_deaminase_cofac_BS"/>
</dbReference>
<dbReference type="InterPro" id="IPR022417">
    <property type="entry name" value="Porphobilin_deaminase_N"/>
</dbReference>
<dbReference type="InterPro" id="IPR022418">
    <property type="entry name" value="Porphobilinogen_deaminase_C"/>
</dbReference>
<dbReference type="InterPro" id="IPR036803">
    <property type="entry name" value="Porphobilinogen_deaminase_C_sf"/>
</dbReference>
<dbReference type="NCBIfam" id="TIGR00212">
    <property type="entry name" value="hemC"/>
    <property type="match status" value="1"/>
</dbReference>
<dbReference type="PANTHER" id="PTHR11557">
    <property type="entry name" value="PORPHOBILINOGEN DEAMINASE"/>
    <property type="match status" value="1"/>
</dbReference>
<dbReference type="PANTHER" id="PTHR11557:SF0">
    <property type="entry name" value="PORPHOBILINOGEN DEAMINASE"/>
    <property type="match status" value="1"/>
</dbReference>
<dbReference type="Pfam" id="PF01379">
    <property type="entry name" value="Porphobil_deam"/>
    <property type="match status" value="1"/>
</dbReference>
<dbReference type="Pfam" id="PF03900">
    <property type="entry name" value="Porphobil_deamC"/>
    <property type="match status" value="1"/>
</dbReference>
<dbReference type="PIRSF" id="PIRSF001438">
    <property type="entry name" value="4pyrrol_synth_OHMeBilane_synth"/>
    <property type="match status" value="1"/>
</dbReference>
<dbReference type="PRINTS" id="PR00151">
    <property type="entry name" value="PORPHBDMNASE"/>
</dbReference>
<dbReference type="SUPFAM" id="SSF53850">
    <property type="entry name" value="Periplasmic binding protein-like II"/>
    <property type="match status" value="1"/>
</dbReference>
<dbReference type="SUPFAM" id="SSF54782">
    <property type="entry name" value="Porphobilinogen deaminase (hydroxymethylbilane synthase), C-terminal domain"/>
    <property type="match status" value="1"/>
</dbReference>
<dbReference type="PROSITE" id="PS00533">
    <property type="entry name" value="PORPHOBILINOGEN_DEAM"/>
    <property type="match status" value="1"/>
</dbReference>
<gene>
    <name evidence="1" type="primary">hemC</name>
    <name type="ordered locus">Bpet2065</name>
</gene>
<name>HEM3_BORPD</name>
<keyword id="KW-0627">Porphyrin biosynthesis</keyword>
<keyword id="KW-0808">Transferase</keyword>
<feature type="chain" id="PRO_1000114135" description="Porphobilinogen deaminase">
    <location>
        <begin position="1"/>
        <end position="313"/>
    </location>
</feature>
<feature type="modified residue" description="S-(dipyrrolylmethanemethyl)cysteine" evidence="1">
    <location>
        <position position="243"/>
    </location>
</feature>
<sequence length="313" mass="33482">MSVPQRLVIATRASRLALWQAEHVRDRLRALYPACAVELLTLTTRGDQILDRTLSKVGGKGLFVKELETALLDGRADLAVHSLKDVPVDLQAPFELCAILERADPRDAFVSNQYTTLADLPAGAVVGTSSLRRESQIRQRYPHLSVKPLRGNLDTRLSKLDRGDYAAIVLAAAGLQRLGMGERIRSLLEPEDSLPAAGQGALGIEIRNDRNDLREWLAPLACSRTTACVVAERAVSRALGGSCQVPLAAYAELNGNSLALRALVASPDGTRVIRSQHAGPAEQAQAIGQAAAQELLSNGADAILAELQDPPAS</sequence>
<organism>
    <name type="scientific">Bordetella petrii (strain ATCC BAA-461 / DSM 12804 / CCUG 43448)</name>
    <dbReference type="NCBI Taxonomy" id="340100"/>
    <lineage>
        <taxon>Bacteria</taxon>
        <taxon>Pseudomonadati</taxon>
        <taxon>Pseudomonadota</taxon>
        <taxon>Betaproteobacteria</taxon>
        <taxon>Burkholderiales</taxon>
        <taxon>Alcaligenaceae</taxon>
        <taxon>Bordetella</taxon>
    </lineage>
</organism>
<accession>A9IKF3</accession>
<protein>
    <recommendedName>
        <fullName evidence="1">Porphobilinogen deaminase</fullName>
        <shortName evidence="1">PBG</shortName>
        <ecNumber evidence="1">2.5.1.61</ecNumber>
    </recommendedName>
    <alternativeName>
        <fullName evidence="1">Hydroxymethylbilane synthase</fullName>
        <shortName evidence="1">HMBS</shortName>
    </alternativeName>
    <alternativeName>
        <fullName evidence="1">Pre-uroporphyrinogen synthase</fullName>
    </alternativeName>
</protein>